<protein>
    <recommendedName>
        <fullName evidence="1">Large ribosomal subunit protein uL30</fullName>
    </recommendedName>
    <alternativeName>
        <fullName evidence="5">50S ribosomal protein L30</fullName>
    </alternativeName>
</protein>
<keyword id="KW-0002">3D-structure</keyword>
<keyword id="KW-0903">Direct protein sequencing</keyword>
<keyword id="KW-1185">Reference proteome</keyword>
<keyword id="KW-0687">Ribonucleoprotein</keyword>
<keyword id="KW-0689">Ribosomal protein</keyword>
<comment type="subunit">
    <text>Part of the 50S ribosomal subunit.</text>
</comment>
<comment type="mass spectrometry" mass="6655.0" method="MALDI" evidence="3"/>
<comment type="similarity">
    <text evidence="1">Belongs to the universal ribosomal protein uL30 family.</text>
</comment>
<dbReference type="EMBL" id="AP008226">
    <property type="protein sequence ID" value="BAD71497.1"/>
    <property type="molecule type" value="Genomic_DNA"/>
</dbReference>
<dbReference type="RefSeq" id="WP_008633387.1">
    <property type="nucleotide sequence ID" value="NC_006461.1"/>
</dbReference>
<dbReference type="RefSeq" id="YP_144940.1">
    <property type="nucleotide sequence ID" value="NC_006461.1"/>
</dbReference>
<dbReference type="PDB" id="1ML5">
    <property type="method" value="EM"/>
    <property type="resolution" value="14.00 A"/>
    <property type="chains" value="x=1-60"/>
</dbReference>
<dbReference type="PDB" id="1VVJ">
    <property type="method" value="X-ray"/>
    <property type="resolution" value="3.44 A"/>
    <property type="chains" value="R3/Y3=1-60"/>
</dbReference>
<dbReference type="PDB" id="1VY4">
    <property type="method" value="X-ray"/>
    <property type="resolution" value="2.60 A"/>
    <property type="chains" value="B3/D3=1-60"/>
</dbReference>
<dbReference type="PDB" id="1VY5">
    <property type="method" value="X-ray"/>
    <property type="resolution" value="2.55 A"/>
    <property type="chains" value="B3/D3=1-60"/>
</dbReference>
<dbReference type="PDB" id="1VY6">
    <property type="method" value="X-ray"/>
    <property type="resolution" value="2.90 A"/>
    <property type="chains" value="B3/D3=1-60"/>
</dbReference>
<dbReference type="PDB" id="1VY7">
    <property type="method" value="X-ray"/>
    <property type="resolution" value="2.80 A"/>
    <property type="chains" value="B3/D3=1-60"/>
</dbReference>
<dbReference type="PDB" id="4L47">
    <property type="method" value="X-ray"/>
    <property type="resolution" value="3.22 A"/>
    <property type="chains" value="R3/Y3=1-60"/>
</dbReference>
<dbReference type="PDB" id="4L71">
    <property type="method" value="X-ray"/>
    <property type="resolution" value="3.90 A"/>
    <property type="chains" value="R3/Y3=1-60"/>
</dbReference>
<dbReference type="PDB" id="4LEL">
    <property type="method" value="X-ray"/>
    <property type="resolution" value="3.90 A"/>
    <property type="chains" value="R3/Y3=1-60"/>
</dbReference>
<dbReference type="PDB" id="4LFZ">
    <property type="method" value="X-ray"/>
    <property type="resolution" value="3.92 A"/>
    <property type="chains" value="R3/Y3=1-60"/>
</dbReference>
<dbReference type="PDB" id="4LNT">
    <property type="method" value="X-ray"/>
    <property type="resolution" value="2.94 A"/>
    <property type="chains" value="R3/Y3=1-60"/>
</dbReference>
<dbReference type="PDB" id="4LSK">
    <property type="method" value="X-ray"/>
    <property type="resolution" value="3.48 A"/>
    <property type="chains" value="R3/Y3=1-60"/>
</dbReference>
<dbReference type="PDB" id="4LT8">
    <property type="method" value="X-ray"/>
    <property type="resolution" value="3.14 A"/>
    <property type="chains" value="R3/Y3=1-60"/>
</dbReference>
<dbReference type="PDB" id="4P6F">
    <property type="method" value="X-ray"/>
    <property type="resolution" value="3.60 A"/>
    <property type="chains" value="R3/Y3=1-60"/>
</dbReference>
<dbReference type="PDB" id="4P70">
    <property type="method" value="X-ray"/>
    <property type="resolution" value="3.68 A"/>
    <property type="chains" value="R3/Y3=1-60"/>
</dbReference>
<dbReference type="PDB" id="4TUA">
    <property type="method" value="X-ray"/>
    <property type="resolution" value="3.60 A"/>
    <property type="chains" value="R3/Y3=1-60"/>
</dbReference>
<dbReference type="PDB" id="4TUB">
    <property type="method" value="X-ray"/>
    <property type="resolution" value="3.60 A"/>
    <property type="chains" value="R3/Y3=1-60"/>
</dbReference>
<dbReference type="PDB" id="4TUC">
    <property type="method" value="X-ray"/>
    <property type="resolution" value="3.60 A"/>
    <property type="chains" value="R3/Y3=1-60"/>
</dbReference>
<dbReference type="PDB" id="4TUD">
    <property type="method" value="X-ray"/>
    <property type="resolution" value="3.60 A"/>
    <property type="chains" value="R3/Y3=1-60"/>
</dbReference>
<dbReference type="PDB" id="4TUE">
    <property type="method" value="X-ray"/>
    <property type="resolution" value="3.50 A"/>
    <property type="chains" value="R3/Y3=1-60"/>
</dbReference>
<dbReference type="PDB" id="4V42">
    <property type="method" value="X-ray"/>
    <property type="resolution" value="5.50 A"/>
    <property type="chains" value="BX=1-60"/>
</dbReference>
<dbReference type="PDB" id="4V4P">
    <property type="method" value="X-ray"/>
    <property type="resolution" value="5.50 A"/>
    <property type="chains" value="AX=1-60"/>
</dbReference>
<dbReference type="PDB" id="4V4R">
    <property type="method" value="X-ray"/>
    <property type="resolution" value="5.90 A"/>
    <property type="chains" value="3=1-60"/>
</dbReference>
<dbReference type="PDB" id="4V4S">
    <property type="method" value="X-ray"/>
    <property type="resolution" value="6.76 A"/>
    <property type="chains" value="3=1-60"/>
</dbReference>
<dbReference type="PDB" id="4V4T">
    <property type="method" value="X-ray"/>
    <property type="resolution" value="6.46 A"/>
    <property type="chains" value="3=1-60"/>
</dbReference>
<dbReference type="PDB" id="4V4X">
    <property type="method" value="X-ray"/>
    <property type="resolution" value="5.00 A"/>
    <property type="chains" value="B2=1-60"/>
</dbReference>
<dbReference type="PDB" id="4V4Y">
    <property type="method" value="X-ray"/>
    <property type="resolution" value="5.50 A"/>
    <property type="chains" value="B2=1-60"/>
</dbReference>
<dbReference type="PDB" id="4V4Z">
    <property type="method" value="X-ray"/>
    <property type="resolution" value="4.51 A"/>
    <property type="chains" value="B2=1-60"/>
</dbReference>
<dbReference type="PDB" id="4V51">
    <property type="method" value="X-ray"/>
    <property type="resolution" value="2.80 A"/>
    <property type="chains" value="B3/D3=2-60"/>
</dbReference>
<dbReference type="PDB" id="4V5A">
    <property type="method" value="X-ray"/>
    <property type="resolution" value="3.50 A"/>
    <property type="chains" value="B3/D3=2-60"/>
</dbReference>
<dbReference type="PDB" id="4V5C">
    <property type="method" value="X-ray"/>
    <property type="resolution" value="3.30 A"/>
    <property type="chains" value="B3/D3=1-60"/>
</dbReference>
<dbReference type="PDB" id="4V5D">
    <property type="method" value="X-ray"/>
    <property type="resolution" value="3.50 A"/>
    <property type="chains" value="B3/D3=1-60"/>
</dbReference>
<dbReference type="PDB" id="4V5E">
    <property type="method" value="X-ray"/>
    <property type="resolution" value="3.45 A"/>
    <property type="chains" value="B3/D3=1-60"/>
</dbReference>
<dbReference type="PDB" id="4V5F">
    <property type="method" value="X-ray"/>
    <property type="resolution" value="3.60 A"/>
    <property type="chains" value="B3/D3=1-60"/>
</dbReference>
<dbReference type="PDB" id="4V5G">
    <property type="method" value="X-ray"/>
    <property type="resolution" value="3.60 A"/>
    <property type="chains" value="B3/D3=1-60"/>
</dbReference>
<dbReference type="PDB" id="4V5J">
    <property type="method" value="X-ray"/>
    <property type="resolution" value="3.10 A"/>
    <property type="chains" value="B3/D3=1-60"/>
</dbReference>
<dbReference type="PDB" id="4V5K">
    <property type="method" value="X-ray"/>
    <property type="resolution" value="3.20 A"/>
    <property type="chains" value="B3/D3=1-60"/>
</dbReference>
<dbReference type="PDB" id="4V5L">
    <property type="method" value="X-ray"/>
    <property type="resolution" value="3.10 A"/>
    <property type="chains" value="B3=1-60"/>
</dbReference>
<dbReference type="PDB" id="4V5M">
    <property type="method" value="EM"/>
    <property type="resolution" value="7.80 A"/>
    <property type="chains" value="B3=1-60"/>
</dbReference>
<dbReference type="PDB" id="4V5N">
    <property type="method" value="EM"/>
    <property type="resolution" value="7.60 A"/>
    <property type="chains" value="B3=1-60"/>
</dbReference>
<dbReference type="PDB" id="4V5P">
    <property type="method" value="X-ray"/>
    <property type="resolution" value="3.10 A"/>
    <property type="chains" value="B3/D3=1-60"/>
</dbReference>
<dbReference type="PDB" id="4V5Q">
    <property type="method" value="X-ray"/>
    <property type="resolution" value="3.10 A"/>
    <property type="chains" value="B3/D3=1-60"/>
</dbReference>
<dbReference type="PDB" id="4V5R">
    <property type="method" value="X-ray"/>
    <property type="resolution" value="3.10 A"/>
    <property type="chains" value="B3/D3=1-60"/>
</dbReference>
<dbReference type="PDB" id="4V5S">
    <property type="method" value="X-ray"/>
    <property type="resolution" value="3.10 A"/>
    <property type="chains" value="B3/D3=1-60"/>
</dbReference>
<dbReference type="PDB" id="4V68">
    <property type="method" value="EM"/>
    <property type="resolution" value="6.40 A"/>
    <property type="chains" value="B3=1-60"/>
</dbReference>
<dbReference type="PDB" id="4V6A">
    <property type="method" value="X-ray"/>
    <property type="resolution" value="3.10 A"/>
    <property type="chains" value="B3/D3=1-60"/>
</dbReference>
<dbReference type="PDB" id="4V6F">
    <property type="method" value="X-ray"/>
    <property type="resolution" value="3.10 A"/>
    <property type="chains" value="AX/DX=1-60"/>
</dbReference>
<dbReference type="PDB" id="4V6G">
    <property type="method" value="X-ray"/>
    <property type="resolution" value="3.50 A"/>
    <property type="chains" value="BX/DX=1-60"/>
</dbReference>
<dbReference type="PDB" id="4V7J">
    <property type="method" value="X-ray"/>
    <property type="resolution" value="3.30 A"/>
    <property type="chains" value="A3/B3=1-60"/>
</dbReference>
<dbReference type="PDB" id="4V7K">
    <property type="method" value="X-ray"/>
    <property type="resolution" value="3.60 A"/>
    <property type="chains" value="A3/B3=1-60"/>
</dbReference>
<dbReference type="PDB" id="4V7L">
    <property type="method" value="X-ray"/>
    <property type="resolution" value="3.00 A"/>
    <property type="chains" value="B3/D3=1-60"/>
</dbReference>
<dbReference type="PDB" id="4V7M">
    <property type="method" value="X-ray"/>
    <property type="resolution" value="3.45 A"/>
    <property type="chains" value="B3/D3=1-60"/>
</dbReference>
<dbReference type="PDB" id="4V7W">
    <property type="method" value="X-ray"/>
    <property type="resolution" value="3.00 A"/>
    <property type="chains" value="B3/D3=1-60"/>
</dbReference>
<dbReference type="PDB" id="4V7X">
    <property type="method" value="X-ray"/>
    <property type="resolution" value="3.00 A"/>
    <property type="chains" value="B3/D3=1-60"/>
</dbReference>
<dbReference type="PDB" id="4V7Y">
    <property type="method" value="X-ray"/>
    <property type="resolution" value="3.00 A"/>
    <property type="chains" value="B3/D3=1-60"/>
</dbReference>
<dbReference type="PDB" id="4V7Z">
    <property type="method" value="X-ray"/>
    <property type="resolution" value="3.10 A"/>
    <property type="chains" value="B3/D3=1-60"/>
</dbReference>
<dbReference type="PDB" id="4V87">
    <property type="method" value="X-ray"/>
    <property type="resolution" value="3.10 A"/>
    <property type="chains" value="AX/DX=2-60"/>
</dbReference>
<dbReference type="PDB" id="4V8A">
    <property type="method" value="X-ray"/>
    <property type="resolution" value="3.20 A"/>
    <property type="chains" value="A3/B3=1-60"/>
</dbReference>
<dbReference type="PDB" id="4V8B">
    <property type="method" value="X-ray"/>
    <property type="resolution" value="3.00 A"/>
    <property type="chains" value="BX/DX=1-60"/>
</dbReference>
<dbReference type="PDB" id="4V8C">
    <property type="method" value="X-ray"/>
    <property type="resolution" value="3.30 A"/>
    <property type="chains" value="AX/BX=1-60"/>
</dbReference>
<dbReference type="PDB" id="4V8D">
    <property type="method" value="X-ray"/>
    <property type="resolution" value="3.00 A"/>
    <property type="chains" value="BX/DX=1-60"/>
</dbReference>
<dbReference type="PDB" id="4V8E">
    <property type="method" value="X-ray"/>
    <property type="resolution" value="3.30 A"/>
    <property type="chains" value="AX/CX=1-60"/>
</dbReference>
<dbReference type="PDB" id="4V8F">
    <property type="method" value="X-ray"/>
    <property type="resolution" value="3.30 A"/>
    <property type="chains" value="AX/DX=1-60"/>
</dbReference>
<dbReference type="PDB" id="4V8G">
    <property type="method" value="X-ray"/>
    <property type="resolution" value="3.00 A"/>
    <property type="chains" value="B3/D3=1-60"/>
</dbReference>
<dbReference type="PDB" id="4V8H">
    <property type="method" value="X-ray"/>
    <property type="resolution" value="3.10 A"/>
    <property type="chains" value="B3/D3=1-60"/>
</dbReference>
<dbReference type="PDB" id="4V8I">
    <property type="method" value="X-ray"/>
    <property type="resolution" value="2.70 A"/>
    <property type="chains" value="B3/D3=1-60"/>
</dbReference>
<dbReference type="PDB" id="4V8J">
    <property type="method" value="X-ray"/>
    <property type="resolution" value="3.90 A"/>
    <property type="chains" value="B3/D3=1-60"/>
</dbReference>
<dbReference type="PDB" id="4V8N">
    <property type="method" value="X-ray"/>
    <property type="resolution" value="3.10 A"/>
    <property type="chains" value="B3/D3=1-60"/>
</dbReference>
<dbReference type="PDB" id="4V8O">
    <property type="method" value="X-ray"/>
    <property type="resolution" value="3.80 A"/>
    <property type="chains" value="B3=1-60"/>
</dbReference>
<dbReference type="PDB" id="4V8Q">
    <property type="method" value="X-ray"/>
    <property type="resolution" value="3.10 A"/>
    <property type="chains" value="A3=1-60"/>
</dbReference>
<dbReference type="PDB" id="4V8U">
    <property type="method" value="X-ray"/>
    <property type="resolution" value="3.70 A"/>
    <property type="chains" value="B3/D3=1-60"/>
</dbReference>
<dbReference type="PDB" id="4V8X">
    <property type="method" value="X-ray"/>
    <property type="resolution" value="3.35 A"/>
    <property type="chains" value="B3/D3=1-60"/>
</dbReference>
<dbReference type="PDB" id="4V90">
    <property type="method" value="X-ray"/>
    <property type="resolution" value="2.95 A"/>
    <property type="chains" value="B3=1-60"/>
</dbReference>
<dbReference type="PDB" id="4V95">
    <property type="method" value="X-ray"/>
    <property type="resolution" value="3.20 A"/>
    <property type="chains" value="B3/D3=1-60"/>
</dbReference>
<dbReference type="PDB" id="4V97">
    <property type="method" value="X-ray"/>
    <property type="resolution" value="3.52 A"/>
    <property type="chains" value="B3/D3=1-60"/>
</dbReference>
<dbReference type="PDB" id="4V9A">
    <property type="method" value="X-ray"/>
    <property type="resolution" value="3.30 A"/>
    <property type="chains" value="BX/DX=1-60"/>
</dbReference>
<dbReference type="PDB" id="4V9B">
    <property type="method" value="X-ray"/>
    <property type="resolution" value="3.10 A"/>
    <property type="chains" value="BX/DX=1-60"/>
</dbReference>
<dbReference type="PDB" id="4V9H">
    <property type="method" value="X-ray"/>
    <property type="resolution" value="2.86 A"/>
    <property type="chains" value="B3=1-60"/>
</dbReference>
<dbReference type="PDB" id="4V9I">
    <property type="method" value="X-ray"/>
    <property type="resolution" value="3.30 A"/>
    <property type="chains" value="B3/D3=1-59"/>
</dbReference>
<dbReference type="PDB" id="4V9R">
    <property type="method" value="X-ray"/>
    <property type="resolution" value="3.00 A"/>
    <property type="chains" value="B3/D3=1-60"/>
</dbReference>
<dbReference type="PDB" id="4V9S">
    <property type="method" value="X-ray"/>
    <property type="resolution" value="3.10 A"/>
    <property type="chains" value="B3/D3=1-60"/>
</dbReference>
<dbReference type="PDB" id="4W2E">
    <property type="method" value="X-ray"/>
    <property type="resolution" value="2.90 A"/>
    <property type="chains" value="3=1-60"/>
</dbReference>
<dbReference type="PDB" id="4W2F">
    <property type="method" value="X-ray"/>
    <property type="resolution" value="2.40 A"/>
    <property type="chains" value="B3/D3=1-60"/>
</dbReference>
<dbReference type="PDB" id="4W2G">
    <property type="method" value="X-ray"/>
    <property type="resolution" value="2.55 A"/>
    <property type="chains" value="B3/D3=1-60"/>
</dbReference>
<dbReference type="PDB" id="4W2H">
    <property type="method" value="X-ray"/>
    <property type="resolution" value="2.70 A"/>
    <property type="chains" value="B3/D3=1-60"/>
</dbReference>
<dbReference type="PDB" id="4W2I">
    <property type="method" value="X-ray"/>
    <property type="resolution" value="2.70 A"/>
    <property type="chains" value="B3/D3=1-60"/>
</dbReference>
<dbReference type="PDB" id="4W4G">
    <property type="method" value="X-ray"/>
    <property type="resolution" value="3.30 A"/>
    <property type="chains" value="R3/Y3=1-60"/>
</dbReference>
<dbReference type="PDB" id="4WPO">
    <property type="method" value="X-ray"/>
    <property type="resolution" value="2.80 A"/>
    <property type="chains" value="A3/C3=1-60"/>
</dbReference>
<dbReference type="PDB" id="4WQ1">
    <property type="method" value="X-ray"/>
    <property type="resolution" value="3.10 A"/>
    <property type="chains" value="H5/L8=2-60"/>
</dbReference>
<dbReference type="PDB" id="4WQF">
    <property type="method" value="X-ray"/>
    <property type="resolution" value="2.80 A"/>
    <property type="chains" value="A3/C3=1-60"/>
</dbReference>
<dbReference type="PDB" id="4WQR">
    <property type="method" value="X-ray"/>
    <property type="resolution" value="3.15 A"/>
    <property type="chains" value="H5/L8=1-60"/>
</dbReference>
<dbReference type="PDB" id="4WQU">
    <property type="method" value="X-ray"/>
    <property type="resolution" value="2.80 A"/>
    <property type="chains" value="A3/C3=1-60"/>
</dbReference>
<dbReference type="PDB" id="4WQY">
    <property type="method" value="X-ray"/>
    <property type="resolution" value="2.80 A"/>
    <property type="chains" value="A3/C3=1-60"/>
</dbReference>
<dbReference type="PDB" id="4WR6">
    <property type="method" value="X-ray"/>
    <property type="resolution" value="3.05 A"/>
    <property type="chains" value="H5/L8=1-60"/>
</dbReference>
<dbReference type="PDB" id="4WRA">
    <property type="method" value="X-ray"/>
    <property type="resolution" value="3.05 A"/>
    <property type="chains" value="H5/L8=1-60"/>
</dbReference>
<dbReference type="PDB" id="4WRO">
    <property type="method" value="X-ray"/>
    <property type="resolution" value="3.05 A"/>
    <property type="chains" value="L8=1-60"/>
</dbReference>
<dbReference type="PDB" id="4WSD">
    <property type="method" value="X-ray"/>
    <property type="resolution" value="2.95 A"/>
    <property type="chains" value="H5/L8=1-60"/>
</dbReference>
<dbReference type="PDB" id="4WSM">
    <property type="method" value="X-ray"/>
    <property type="resolution" value="3.30 A"/>
    <property type="chains" value="H5/L8=1-60"/>
</dbReference>
<dbReference type="PDB" id="4WT1">
    <property type="method" value="X-ray"/>
    <property type="resolution" value="3.05 A"/>
    <property type="chains" value="H5/L8=1-60"/>
</dbReference>
<dbReference type="PDB" id="4WT8">
    <property type="method" value="X-ray"/>
    <property type="resolution" value="3.40 A"/>
    <property type="chains" value="CL/DL=1-59"/>
</dbReference>
<dbReference type="PDB" id="4WU1">
    <property type="method" value="X-ray"/>
    <property type="resolution" value="3.20 A"/>
    <property type="chains" value="H5/L8=1-60"/>
</dbReference>
<dbReference type="PDB" id="4WZD">
    <property type="method" value="X-ray"/>
    <property type="resolution" value="3.10 A"/>
    <property type="chains" value="H5/L8=1-60"/>
</dbReference>
<dbReference type="PDB" id="4WZO">
    <property type="method" value="X-ray"/>
    <property type="resolution" value="3.30 A"/>
    <property type="chains" value="H5/L8=1-60"/>
</dbReference>
<dbReference type="PDB" id="4Y4O">
    <property type="method" value="X-ray"/>
    <property type="resolution" value="2.30 A"/>
    <property type="chains" value="13/23=1-60"/>
</dbReference>
<dbReference type="PDB" id="4Y4P">
    <property type="method" value="X-ray"/>
    <property type="resolution" value="2.50 A"/>
    <property type="chains" value="13/23=1-60"/>
</dbReference>
<dbReference type="PDB" id="4YPB">
    <property type="method" value="X-ray"/>
    <property type="resolution" value="3.40 A"/>
    <property type="chains" value="R3/Y3=1-60"/>
</dbReference>
<dbReference type="PDB" id="4YZV">
    <property type="method" value="X-ray"/>
    <property type="resolution" value="3.10 A"/>
    <property type="chains" value="R3/Y3=1-60"/>
</dbReference>
<dbReference type="PDB" id="4Z3S">
    <property type="method" value="X-ray"/>
    <property type="resolution" value="2.65 A"/>
    <property type="chains" value="13/23=1-60"/>
</dbReference>
<dbReference type="PDB" id="4Z8C">
    <property type="method" value="X-ray"/>
    <property type="resolution" value="2.90 A"/>
    <property type="chains" value="13/23=1-60"/>
</dbReference>
<dbReference type="PDB" id="4ZER">
    <property type="method" value="X-ray"/>
    <property type="resolution" value="3.10 A"/>
    <property type="chains" value="13/23=2-60"/>
</dbReference>
<dbReference type="PDB" id="4ZSN">
    <property type="method" value="X-ray"/>
    <property type="resolution" value="3.60 A"/>
    <property type="chains" value="R3/Y3=1-60"/>
</dbReference>
<dbReference type="PDB" id="5A9Z">
    <property type="method" value="EM"/>
    <property type="resolution" value="4.70 A"/>
    <property type="chains" value="AZ=2-60"/>
</dbReference>
<dbReference type="PDB" id="5AA0">
    <property type="method" value="EM"/>
    <property type="resolution" value="5.00 A"/>
    <property type="chains" value="AZ=2-60"/>
</dbReference>
<dbReference type="PDB" id="5CZP">
    <property type="method" value="X-ray"/>
    <property type="resolution" value="3.30 A"/>
    <property type="chains" value="R3/Y3=1-60"/>
</dbReference>
<dbReference type="PDB" id="5D8B">
    <property type="method" value="X-ray"/>
    <property type="resolution" value="3.63 A"/>
    <property type="chains" value="TB/X=1-60"/>
</dbReference>
<dbReference type="PDB" id="5DFE">
    <property type="method" value="X-ray"/>
    <property type="resolution" value="3.10 A"/>
    <property type="chains" value="R3/Y3=1-60"/>
</dbReference>
<dbReference type="PDB" id="5DOX">
    <property type="method" value="X-ray"/>
    <property type="resolution" value="3.10 A"/>
    <property type="chains" value="13/23=1-60"/>
</dbReference>
<dbReference type="PDB" id="5DOY">
    <property type="method" value="X-ray"/>
    <property type="resolution" value="2.60 A"/>
    <property type="chains" value="13/23=1-60"/>
</dbReference>
<dbReference type="PDB" id="5E7K">
    <property type="method" value="X-ray"/>
    <property type="resolution" value="3.20 A"/>
    <property type="chains" value="H5/L8=1-60"/>
</dbReference>
<dbReference type="PDB" id="5E81">
    <property type="method" value="X-ray"/>
    <property type="resolution" value="2.95 A"/>
    <property type="chains" value="H5/L8=1-60"/>
</dbReference>
<dbReference type="PDB" id="5EL4">
    <property type="method" value="X-ray"/>
    <property type="resolution" value="3.15 A"/>
    <property type="chains" value="H5/L8=1-60"/>
</dbReference>
<dbReference type="PDB" id="5EL5">
    <property type="method" value="X-ray"/>
    <property type="resolution" value="3.15 A"/>
    <property type="chains" value="H5/L8=1-60"/>
</dbReference>
<dbReference type="PDB" id="5EL6">
    <property type="method" value="X-ray"/>
    <property type="resolution" value="3.10 A"/>
    <property type="chains" value="H5/L8=1-60"/>
</dbReference>
<dbReference type="PDB" id="5EL7">
    <property type="method" value="X-ray"/>
    <property type="resolution" value="3.15 A"/>
    <property type="chains" value="H5/L8=1-60"/>
</dbReference>
<dbReference type="PDB" id="5F8K">
    <property type="method" value="X-ray"/>
    <property type="resolution" value="2.80 A"/>
    <property type="chains" value="13/23=2-60"/>
</dbReference>
<dbReference type="PDB" id="5FDU">
    <property type="method" value="X-ray"/>
    <property type="resolution" value="2.90 A"/>
    <property type="chains" value="13/23=2-60"/>
</dbReference>
<dbReference type="PDB" id="5FDV">
    <property type="method" value="X-ray"/>
    <property type="resolution" value="2.80 A"/>
    <property type="chains" value="13/23=2-60"/>
</dbReference>
<dbReference type="PDB" id="5HAU">
    <property type="method" value="X-ray"/>
    <property type="resolution" value="3.00 A"/>
    <property type="chains" value="11/21=1-60"/>
</dbReference>
<dbReference type="PDB" id="5HCP">
    <property type="method" value="X-ray"/>
    <property type="resolution" value="2.89 A"/>
    <property type="chains" value="13/23=1-60"/>
</dbReference>
<dbReference type="PDB" id="5HCQ">
    <property type="method" value="X-ray"/>
    <property type="resolution" value="2.80 A"/>
    <property type="chains" value="13/23=1-60"/>
</dbReference>
<dbReference type="PDB" id="5HCR">
    <property type="method" value="X-ray"/>
    <property type="resolution" value="2.80 A"/>
    <property type="chains" value="13/23=1-60"/>
</dbReference>
<dbReference type="PDB" id="5HD1">
    <property type="method" value="X-ray"/>
    <property type="resolution" value="2.70 A"/>
    <property type="chains" value="13/23=1-60"/>
</dbReference>
<dbReference type="PDB" id="5IB7">
    <property type="method" value="X-ray"/>
    <property type="resolution" value="2.99 A"/>
    <property type="chains" value="H5/L8=1-60"/>
</dbReference>
<dbReference type="PDB" id="5IB8">
    <property type="method" value="X-ray"/>
    <property type="resolution" value="3.13 A"/>
    <property type="chains" value="H5/L8=1-60"/>
</dbReference>
<dbReference type="PDB" id="5IBB">
    <property type="method" value="X-ray"/>
    <property type="resolution" value="2.96 A"/>
    <property type="chains" value="H5/L8=1-60"/>
</dbReference>
<dbReference type="PDB" id="5IMQ">
    <property type="method" value="EM"/>
    <property type="resolution" value="3.80 A"/>
    <property type="chains" value="u=1-60"/>
</dbReference>
<dbReference type="PDB" id="5IMR">
    <property type="method" value="EM"/>
    <property type="chains" value="u=1-60"/>
</dbReference>
<dbReference type="PDB" id="5J30">
    <property type="method" value="X-ray"/>
    <property type="resolution" value="3.20 A"/>
    <property type="chains" value="R3/Y3=1-60"/>
</dbReference>
<dbReference type="PDB" id="5J3C">
    <property type="method" value="X-ray"/>
    <property type="resolution" value="3.04 A"/>
    <property type="chains" value="R3/Y3=1-60"/>
</dbReference>
<dbReference type="PDB" id="5J4B">
    <property type="method" value="X-ray"/>
    <property type="resolution" value="2.60 A"/>
    <property type="chains" value="13/23=1-60"/>
</dbReference>
<dbReference type="PDB" id="5J4C">
    <property type="method" value="X-ray"/>
    <property type="resolution" value="2.80 A"/>
    <property type="chains" value="13/23=1-60"/>
</dbReference>
<dbReference type="PDB" id="5J8B">
    <property type="method" value="X-ray"/>
    <property type="resolution" value="2.60 A"/>
    <property type="chains" value="3=1-60"/>
</dbReference>
<dbReference type="PDB" id="5NDJ">
    <property type="method" value="X-ray"/>
    <property type="resolution" value="3.15 A"/>
    <property type="chains" value="H5/L8=1-60"/>
</dbReference>
<dbReference type="PDB" id="5NDK">
    <property type="method" value="X-ray"/>
    <property type="resolution" value="2.95 A"/>
    <property type="chains" value="H5/L8=1-60"/>
</dbReference>
<dbReference type="PDB" id="5OT7">
    <property type="method" value="EM"/>
    <property type="resolution" value="3.80 A"/>
    <property type="chains" value="Y=1-60"/>
</dbReference>
<dbReference type="PDB" id="5UQ7">
    <property type="method" value="EM"/>
    <property type="resolution" value="3.50 A"/>
    <property type="chains" value="3=2-60"/>
</dbReference>
<dbReference type="PDB" id="5UQ8">
    <property type="method" value="EM"/>
    <property type="resolution" value="3.20 A"/>
    <property type="chains" value="3=2-60"/>
</dbReference>
<dbReference type="PDB" id="5VP2">
    <property type="method" value="X-ray"/>
    <property type="resolution" value="2.80 A"/>
    <property type="chains" value="13/23=1-60"/>
</dbReference>
<dbReference type="PDB" id="5VPO">
    <property type="method" value="X-ray"/>
    <property type="resolution" value="3.34 A"/>
    <property type="chains" value="R3/Y3=1-60"/>
</dbReference>
<dbReference type="PDB" id="5VPP">
    <property type="method" value="X-ray"/>
    <property type="resolution" value="3.90 A"/>
    <property type="chains" value="R3/Y3=1-60"/>
</dbReference>
<dbReference type="PDB" id="5W4K">
    <property type="method" value="X-ray"/>
    <property type="resolution" value="2.70 A"/>
    <property type="chains" value="13/23=1-60"/>
</dbReference>
<dbReference type="PDB" id="5WIS">
    <property type="method" value="X-ray"/>
    <property type="resolution" value="2.70 A"/>
    <property type="chains" value="13/23=1-60"/>
</dbReference>
<dbReference type="PDB" id="5WIT">
    <property type="method" value="X-ray"/>
    <property type="resolution" value="2.60 A"/>
    <property type="chains" value="13/23=1-60"/>
</dbReference>
<dbReference type="PDB" id="5ZLU">
    <property type="method" value="EM"/>
    <property type="resolution" value="3.60 A"/>
    <property type="chains" value="v=1-60"/>
</dbReference>
<dbReference type="PDB" id="6BUW">
    <property type="method" value="X-ray"/>
    <property type="resolution" value="3.50 A"/>
    <property type="chains" value="R3/Y3=1-60"/>
</dbReference>
<dbReference type="PDB" id="6BZ6">
    <property type="method" value="X-ray"/>
    <property type="resolution" value="3.18 A"/>
    <property type="chains" value="R3/Y3=1-60"/>
</dbReference>
<dbReference type="PDB" id="6BZ7">
    <property type="method" value="X-ray"/>
    <property type="resolution" value="3.68 A"/>
    <property type="chains" value="R3/Y3=1-60"/>
</dbReference>
<dbReference type="PDB" id="6BZ8">
    <property type="method" value="X-ray"/>
    <property type="resolution" value="3.74 A"/>
    <property type="chains" value="R3/Y3=1-60"/>
</dbReference>
<dbReference type="PDB" id="6C5L">
    <property type="method" value="X-ray"/>
    <property type="resolution" value="3.20 A"/>
    <property type="chains" value="B3/D3=1-60"/>
</dbReference>
<dbReference type="PDB" id="6CAE">
    <property type="method" value="X-ray"/>
    <property type="resolution" value="2.60 A"/>
    <property type="chains" value="13/23=1-60"/>
</dbReference>
<dbReference type="PDB" id="6CFJ">
    <property type="method" value="X-ray"/>
    <property type="resolution" value="2.80 A"/>
    <property type="chains" value="13/23=1-60"/>
</dbReference>
<dbReference type="PDB" id="6CFK">
    <property type="method" value="X-ray"/>
    <property type="resolution" value="2.70 A"/>
    <property type="chains" value="13/23=1-60"/>
</dbReference>
<dbReference type="PDB" id="6CFL">
    <property type="method" value="X-ray"/>
    <property type="resolution" value="2.60 A"/>
    <property type="chains" value="13/23=1-60"/>
</dbReference>
<dbReference type="PDB" id="6CZR">
    <property type="method" value="X-ray"/>
    <property type="resolution" value="3.14 A"/>
    <property type="chains" value="13/23=2-60"/>
</dbReference>
<dbReference type="PDB" id="6FKR">
    <property type="method" value="X-ray"/>
    <property type="resolution" value="3.20 A"/>
    <property type="chains" value="13/23=2-60"/>
</dbReference>
<dbReference type="PDB" id="6GSJ">
    <property type="method" value="X-ray"/>
    <property type="resolution" value="2.96 A"/>
    <property type="chains" value="H5/L8=1-60"/>
</dbReference>
<dbReference type="PDB" id="6GSK">
    <property type="method" value="X-ray"/>
    <property type="resolution" value="3.36 A"/>
    <property type="chains" value="H5/L8=1-60"/>
</dbReference>
<dbReference type="PDB" id="6GSL">
    <property type="method" value="X-ray"/>
    <property type="resolution" value="3.16 A"/>
    <property type="chains" value="H5/L8=1-60"/>
</dbReference>
<dbReference type="PDB" id="6GZQ">
    <property type="method" value="EM"/>
    <property type="resolution" value="3.28 A"/>
    <property type="chains" value="Y1=2-60"/>
</dbReference>
<dbReference type="PDB" id="6GZX">
    <property type="method" value="EM"/>
    <property type="resolution" value="4.57 A"/>
    <property type="chains" value="Y1/Y2=2-60"/>
</dbReference>
<dbReference type="PDB" id="6GZZ">
    <property type="method" value="EM"/>
    <property type="resolution" value="4.13 A"/>
    <property type="chains" value="Y1/Y2=2-60"/>
</dbReference>
<dbReference type="PDB" id="6N9E">
    <property type="method" value="X-ray"/>
    <property type="resolution" value="3.70 A"/>
    <property type="chains" value="13/23=1-60"/>
</dbReference>
<dbReference type="PDB" id="6N9F">
    <property type="method" value="X-ray"/>
    <property type="resolution" value="3.70 A"/>
    <property type="chains" value="13/23=1-60"/>
</dbReference>
<dbReference type="PDB" id="6ND5">
    <property type="method" value="X-ray"/>
    <property type="resolution" value="2.60 A"/>
    <property type="chains" value="13/23=1-60"/>
</dbReference>
<dbReference type="PDB" id="6ND6">
    <property type="method" value="X-ray"/>
    <property type="resolution" value="2.85 A"/>
    <property type="chains" value="13/23=1-60"/>
</dbReference>
<dbReference type="PDB" id="6NDK">
    <property type="method" value="X-ray"/>
    <property type="resolution" value="3.64 A"/>
    <property type="chains" value="R3/Y3=1-60"/>
</dbReference>
<dbReference type="PDB" id="6NSH">
    <property type="method" value="X-ray"/>
    <property type="resolution" value="3.40 A"/>
    <property type="chains" value="R3/Y3=1-60"/>
</dbReference>
<dbReference type="PDB" id="6NTA">
    <property type="method" value="X-ray"/>
    <property type="resolution" value="3.10 A"/>
    <property type="chains" value="R3/Y3=1-60"/>
</dbReference>
<dbReference type="PDB" id="6NUO">
    <property type="method" value="X-ray"/>
    <property type="resolution" value="3.20 A"/>
    <property type="chains" value="R3/Y3=1-60"/>
</dbReference>
<dbReference type="PDB" id="6NWY">
    <property type="method" value="X-ray"/>
    <property type="resolution" value="3.50 A"/>
    <property type="chains" value="R3/Y3=1-60"/>
</dbReference>
<dbReference type="PDB" id="6O3M">
    <property type="method" value="X-ray"/>
    <property type="resolution" value="3.97 A"/>
    <property type="chains" value="R3/Y3=1-60"/>
</dbReference>
<dbReference type="PDB" id="6O97">
    <property type="method" value="X-ray"/>
    <property type="resolution" value="2.75 A"/>
    <property type="chains" value="13/23=1-60"/>
</dbReference>
<dbReference type="PDB" id="6OF1">
    <property type="method" value="X-ray"/>
    <property type="resolution" value="2.80 A"/>
    <property type="chains" value="13/23=1-60"/>
</dbReference>
<dbReference type="PDB" id="6OF6">
    <property type="method" value="X-ray"/>
    <property type="resolution" value="3.20 A"/>
    <property type="chains" value="R3/Y3=1-60"/>
</dbReference>
<dbReference type="PDB" id="6OJ2">
    <property type="method" value="X-ray"/>
    <property type="resolution" value="3.20 A"/>
    <property type="chains" value="R3/Y3=1-60"/>
</dbReference>
<dbReference type="PDB" id="6OPE">
    <property type="method" value="X-ray"/>
    <property type="resolution" value="3.10 A"/>
    <property type="chains" value="R3/Y3=1-60"/>
</dbReference>
<dbReference type="PDB" id="6ORD">
    <property type="method" value="X-ray"/>
    <property type="resolution" value="3.10 A"/>
    <property type="chains" value="R3/Y3=1-60"/>
</dbReference>
<dbReference type="PDB" id="6OSI">
    <property type="method" value="X-ray"/>
    <property type="resolution" value="4.14 A"/>
    <property type="chains" value="R3/Y3=1-60"/>
</dbReference>
<dbReference type="PDB" id="6OTR">
    <property type="method" value="X-ray"/>
    <property type="resolution" value="3.12 A"/>
    <property type="chains" value="R3/Y3=1-60"/>
</dbReference>
<dbReference type="PDB" id="6OXA">
    <property type="method" value="X-ray"/>
    <property type="resolution" value="3.25 A"/>
    <property type="chains" value="R3/Y3=1-60"/>
</dbReference>
<dbReference type="PDB" id="6OXI">
    <property type="method" value="X-ray"/>
    <property type="resolution" value="3.50 A"/>
    <property type="chains" value="R3/Y3=1-60"/>
</dbReference>
<dbReference type="PDB" id="6Q95">
    <property type="method" value="EM"/>
    <property type="resolution" value="3.70 A"/>
    <property type="chains" value="Z=1-60"/>
</dbReference>
<dbReference type="PDB" id="6QNQ">
    <property type="method" value="X-ray"/>
    <property type="resolution" value="3.50 A"/>
    <property type="chains" value="H5/L8=1-60"/>
</dbReference>
<dbReference type="PDB" id="6QNR">
    <property type="method" value="X-ray"/>
    <property type="resolution" value="3.10 A"/>
    <property type="chains" value="H5/L8=1-60"/>
</dbReference>
<dbReference type="PDB" id="6UCQ">
    <property type="method" value="X-ray"/>
    <property type="resolution" value="3.50 A"/>
    <property type="chains" value="13/23=1-60"/>
</dbReference>
<dbReference type="PDB" id="6UO1">
    <property type="method" value="X-ray"/>
    <property type="resolution" value="2.95 A"/>
    <property type="chains" value="13/23=1-60"/>
</dbReference>
<dbReference type="PDB" id="6XHV">
    <property type="method" value="X-ray"/>
    <property type="resolution" value="2.40 A"/>
    <property type="chains" value="13/23=1-60"/>
</dbReference>
<dbReference type="PDB" id="6XHW">
    <property type="method" value="X-ray"/>
    <property type="resolution" value="2.50 A"/>
    <property type="chains" value="13/23=1-60"/>
</dbReference>
<dbReference type="PDB" id="6XHX">
    <property type="method" value="X-ray"/>
    <property type="resolution" value="2.55 A"/>
    <property type="chains" value="13/23=1-60"/>
</dbReference>
<dbReference type="PDB" id="6XHY">
    <property type="method" value="X-ray"/>
    <property type="resolution" value="2.60 A"/>
    <property type="chains" value="13/23=1-60"/>
</dbReference>
<dbReference type="PDB" id="6XQD">
    <property type="method" value="X-ray"/>
    <property type="resolution" value="2.80 A"/>
    <property type="chains" value="13/23=1-60"/>
</dbReference>
<dbReference type="PDB" id="6XQE">
    <property type="method" value="X-ray"/>
    <property type="resolution" value="3.00 A"/>
    <property type="chains" value="13/23=1-60"/>
</dbReference>
<dbReference type="PDB" id="7AZO">
    <property type="method" value="X-ray"/>
    <property type="resolution" value="3.30 A"/>
    <property type="chains" value="L30A/L30B=1-60"/>
</dbReference>
<dbReference type="PDB" id="7AZS">
    <property type="method" value="X-ray"/>
    <property type="resolution" value="3.10 A"/>
    <property type="chains" value="L30A/L30B=1-60"/>
</dbReference>
<dbReference type="PDB" id="7JQL">
    <property type="method" value="X-ray"/>
    <property type="resolution" value="3.00 A"/>
    <property type="chains" value="13/23=1-60"/>
</dbReference>
<dbReference type="PDB" id="7JQM">
    <property type="method" value="X-ray"/>
    <property type="resolution" value="3.05 A"/>
    <property type="chains" value="13/23=1-60"/>
</dbReference>
<dbReference type="PDB" id="7LH5">
    <property type="method" value="X-ray"/>
    <property type="resolution" value="3.27 A"/>
    <property type="chains" value="B3/D3=1-60"/>
</dbReference>
<dbReference type="PDB" id="7MD7">
    <property type="method" value="X-ray"/>
    <property type="resolution" value="2.80 A"/>
    <property type="chains" value="13/23=1-60"/>
</dbReference>
<dbReference type="PDB" id="7RQ8">
    <property type="method" value="X-ray"/>
    <property type="resolution" value="2.50 A"/>
    <property type="chains" value="13/23=1-60"/>
</dbReference>
<dbReference type="PDB" id="7RQ9">
    <property type="method" value="X-ray"/>
    <property type="resolution" value="2.60 A"/>
    <property type="chains" value="13/23=1-60"/>
</dbReference>
<dbReference type="PDB" id="7RQA">
    <property type="method" value="X-ray"/>
    <property type="resolution" value="2.40 A"/>
    <property type="chains" value="13/23=1-60"/>
</dbReference>
<dbReference type="PDB" id="7RQB">
    <property type="method" value="X-ray"/>
    <property type="resolution" value="2.45 A"/>
    <property type="chains" value="13/23=1-60"/>
</dbReference>
<dbReference type="PDB" id="7RQC">
    <property type="method" value="X-ray"/>
    <property type="resolution" value="2.50 A"/>
    <property type="chains" value="13/23=1-60"/>
</dbReference>
<dbReference type="PDB" id="7RQD">
    <property type="method" value="X-ray"/>
    <property type="resolution" value="2.50 A"/>
    <property type="chains" value="13/23=1-60"/>
</dbReference>
<dbReference type="PDB" id="7RQE">
    <property type="method" value="X-ray"/>
    <property type="resolution" value="2.40 A"/>
    <property type="chains" value="13/23=1-60"/>
</dbReference>
<dbReference type="PDB" id="7U2H">
    <property type="method" value="X-ray"/>
    <property type="resolution" value="2.55 A"/>
    <property type="chains" value="13/23=1-60"/>
</dbReference>
<dbReference type="PDB" id="7U2I">
    <property type="method" value="X-ray"/>
    <property type="resolution" value="2.55 A"/>
    <property type="chains" value="13/23=1-60"/>
</dbReference>
<dbReference type="PDB" id="7U2J">
    <property type="method" value="X-ray"/>
    <property type="resolution" value="2.55 A"/>
    <property type="chains" value="13/23=1-60"/>
</dbReference>
<dbReference type="PDB" id="8CVJ">
    <property type="method" value="X-ray"/>
    <property type="resolution" value="2.40 A"/>
    <property type="chains" value="13/23=1-60"/>
</dbReference>
<dbReference type="PDB" id="8CVK">
    <property type="method" value="X-ray"/>
    <property type="resolution" value="2.50 A"/>
    <property type="chains" value="13/23=1-60"/>
</dbReference>
<dbReference type="PDB" id="8CVL">
    <property type="method" value="X-ray"/>
    <property type="resolution" value="2.30 A"/>
    <property type="chains" value="13/23=1-60"/>
</dbReference>
<dbReference type="PDB" id="8EKB">
    <property type="method" value="X-ray"/>
    <property type="resolution" value="2.70 A"/>
    <property type="chains" value="13/23=1-60"/>
</dbReference>
<dbReference type="PDB" id="8EV6">
    <property type="method" value="X-ray"/>
    <property type="resolution" value="2.95 A"/>
    <property type="chains" value="13/23=1-60"/>
</dbReference>
<dbReference type="PDB" id="8EV7">
    <property type="method" value="X-ray"/>
    <property type="resolution" value="2.89 A"/>
    <property type="chains" value="13/23=1-60"/>
</dbReference>
<dbReference type="PDB" id="8FC1">
    <property type="method" value="X-ray"/>
    <property type="resolution" value="2.50 A"/>
    <property type="chains" value="13/23=1-60"/>
</dbReference>
<dbReference type="PDB" id="8FC2">
    <property type="method" value="X-ray"/>
    <property type="resolution" value="2.50 A"/>
    <property type="chains" value="13/23=1-60"/>
</dbReference>
<dbReference type="PDB" id="8FC3">
    <property type="method" value="X-ray"/>
    <property type="resolution" value="2.60 A"/>
    <property type="chains" value="13/23=1-60"/>
</dbReference>
<dbReference type="PDB" id="8FC4">
    <property type="method" value="X-ray"/>
    <property type="resolution" value="2.45 A"/>
    <property type="chains" value="13/23=1-60"/>
</dbReference>
<dbReference type="PDB" id="8FC5">
    <property type="method" value="X-ray"/>
    <property type="resolution" value="2.65 A"/>
    <property type="chains" value="13/23=1-60"/>
</dbReference>
<dbReference type="PDB" id="8FC6">
    <property type="method" value="X-ray"/>
    <property type="resolution" value="2.35 A"/>
    <property type="chains" value="13/23=1-60"/>
</dbReference>
<dbReference type="PDB" id="8FOM">
    <property type="method" value="X-ray"/>
    <property type="resolution" value="3.58 A"/>
    <property type="chains" value="R3/Y3=1-60"/>
</dbReference>
<dbReference type="PDB" id="8FON">
    <property type="method" value="X-ray"/>
    <property type="resolution" value="3.64 A"/>
    <property type="chains" value="R3/Y3=1-60"/>
</dbReference>
<dbReference type="PDB" id="8G29">
    <property type="method" value="X-ray"/>
    <property type="resolution" value="2.55 A"/>
    <property type="chains" value="13/23=1-60"/>
</dbReference>
<dbReference type="PDB" id="8G2A">
    <property type="method" value="X-ray"/>
    <property type="resolution" value="2.45 A"/>
    <property type="chains" value="13/23=1-60"/>
</dbReference>
<dbReference type="PDB" id="8G2B">
    <property type="method" value="X-ray"/>
    <property type="resolution" value="2.55 A"/>
    <property type="chains" value="13/23=1-60"/>
</dbReference>
<dbReference type="PDB" id="8G2C">
    <property type="method" value="X-ray"/>
    <property type="resolution" value="2.65 A"/>
    <property type="chains" value="13/23=1-60"/>
</dbReference>
<dbReference type="PDB" id="8G2D">
    <property type="method" value="X-ray"/>
    <property type="resolution" value="2.70 A"/>
    <property type="chains" value="13/23=1-60"/>
</dbReference>
<dbReference type="PDB" id="8T8B">
    <property type="method" value="X-ray"/>
    <property type="resolution" value="2.65 A"/>
    <property type="chains" value="13/23=1-60"/>
</dbReference>
<dbReference type="PDB" id="8T8C">
    <property type="method" value="X-ray"/>
    <property type="resolution" value="2.60 A"/>
    <property type="chains" value="13/23=1-60"/>
</dbReference>
<dbReference type="PDB" id="8UD6">
    <property type="method" value="X-ray"/>
    <property type="resolution" value="2.70 A"/>
    <property type="chains" value="13/23=1-60"/>
</dbReference>
<dbReference type="PDB" id="8UD7">
    <property type="method" value="X-ray"/>
    <property type="resolution" value="2.55 A"/>
    <property type="chains" value="13/23=1-60"/>
</dbReference>
<dbReference type="PDB" id="8UD8">
    <property type="method" value="X-ray"/>
    <property type="resolution" value="2.60 A"/>
    <property type="chains" value="13/23=1-60"/>
</dbReference>
<dbReference type="PDB" id="8UVR">
    <property type="method" value="X-ray"/>
    <property type="resolution" value="2.60 A"/>
    <property type="chains" value="13/23=1-60"/>
</dbReference>
<dbReference type="PDB" id="8UVS">
    <property type="method" value="X-ray"/>
    <property type="resolution" value="2.75 A"/>
    <property type="chains" value="13/23=1-60"/>
</dbReference>
<dbReference type="PDB" id="8VTU">
    <property type="method" value="X-ray"/>
    <property type="resolution" value="2.40 A"/>
    <property type="chains" value="13/23=1-60"/>
</dbReference>
<dbReference type="PDB" id="8VTV">
    <property type="method" value="X-ray"/>
    <property type="resolution" value="2.55 A"/>
    <property type="chains" value="13/23=1-60"/>
</dbReference>
<dbReference type="PDB" id="8VTW">
    <property type="method" value="X-ray"/>
    <property type="resolution" value="2.35 A"/>
    <property type="chains" value="13/23=1-60"/>
</dbReference>
<dbReference type="PDB" id="8VTX">
    <property type="method" value="X-ray"/>
    <property type="resolution" value="2.40 A"/>
    <property type="chains" value="13/23=1-60"/>
</dbReference>
<dbReference type="PDB" id="8VTY">
    <property type="method" value="X-ray"/>
    <property type="resolution" value="2.60 A"/>
    <property type="chains" value="13/23=1-60"/>
</dbReference>
<dbReference type="PDB" id="8WV1">
    <property type="method" value="X-ray"/>
    <property type="resolution" value="3.99 A"/>
    <property type="chains" value="Y/y=1-60"/>
</dbReference>
<dbReference type="PDB" id="9B00">
    <property type="method" value="X-ray"/>
    <property type="resolution" value="2.80 A"/>
    <property type="chains" value="13/23=1-60"/>
</dbReference>
<dbReference type="PDB" id="9D0J">
    <property type="method" value="X-ray"/>
    <property type="resolution" value="2.50 A"/>
    <property type="chains" value="13/23=1-60"/>
</dbReference>
<dbReference type="PDB" id="9D7R">
    <property type="method" value="X-ray"/>
    <property type="resolution" value="2.70 A"/>
    <property type="chains" value="13/23=1-60"/>
</dbReference>
<dbReference type="PDB" id="9D7S">
    <property type="method" value="X-ray"/>
    <property type="resolution" value="2.85 A"/>
    <property type="chains" value="13/23=1-60"/>
</dbReference>
<dbReference type="PDB" id="9D7T">
    <property type="method" value="X-ray"/>
    <property type="resolution" value="2.70 A"/>
    <property type="chains" value="13/23=1-60"/>
</dbReference>
<dbReference type="PDB" id="9DFC">
    <property type="method" value="X-ray"/>
    <property type="resolution" value="2.50 A"/>
    <property type="chains" value="13/23=1-60"/>
</dbReference>
<dbReference type="PDB" id="9DFD">
    <property type="method" value="X-ray"/>
    <property type="resolution" value="2.60 A"/>
    <property type="chains" value="13/23=1-60"/>
</dbReference>
<dbReference type="PDB" id="9DFE">
    <property type="method" value="X-ray"/>
    <property type="resolution" value="2.60 A"/>
    <property type="chains" value="13/23=1-60"/>
</dbReference>
<dbReference type="PDBsum" id="1ML5"/>
<dbReference type="PDBsum" id="1VVJ"/>
<dbReference type="PDBsum" id="1VY4"/>
<dbReference type="PDBsum" id="1VY5"/>
<dbReference type="PDBsum" id="1VY6"/>
<dbReference type="PDBsum" id="1VY7"/>
<dbReference type="PDBsum" id="4L47"/>
<dbReference type="PDBsum" id="4L71"/>
<dbReference type="PDBsum" id="4LEL"/>
<dbReference type="PDBsum" id="4LFZ"/>
<dbReference type="PDBsum" id="4LNT"/>
<dbReference type="PDBsum" id="4LSK"/>
<dbReference type="PDBsum" id="4LT8"/>
<dbReference type="PDBsum" id="4P6F"/>
<dbReference type="PDBsum" id="4P70"/>
<dbReference type="PDBsum" id="4TUA"/>
<dbReference type="PDBsum" id="4TUB"/>
<dbReference type="PDBsum" id="4TUC"/>
<dbReference type="PDBsum" id="4TUD"/>
<dbReference type="PDBsum" id="4TUE"/>
<dbReference type="PDBsum" id="4V42"/>
<dbReference type="PDBsum" id="4V4P"/>
<dbReference type="PDBsum" id="4V4R"/>
<dbReference type="PDBsum" id="4V4S"/>
<dbReference type="PDBsum" id="4V4T"/>
<dbReference type="PDBsum" id="4V4X"/>
<dbReference type="PDBsum" id="4V4Y"/>
<dbReference type="PDBsum" id="4V4Z"/>
<dbReference type="PDBsum" id="4V51"/>
<dbReference type="PDBsum" id="4V5A"/>
<dbReference type="PDBsum" id="4V5C"/>
<dbReference type="PDBsum" id="4V5D"/>
<dbReference type="PDBsum" id="4V5E"/>
<dbReference type="PDBsum" id="4V5F"/>
<dbReference type="PDBsum" id="4V5G"/>
<dbReference type="PDBsum" id="4V5J"/>
<dbReference type="PDBsum" id="4V5K"/>
<dbReference type="PDBsum" id="4V5L"/>
<dbReference type="PDBsum" id="4V5M"/>
<dbReference type="PDBsum" id="4V5N"/>
<dbReference type="PDBsum" id="4V5P"/>
<dbReference type="PDBsum" id="4V5Q"/>
<dbReference type="PDBsum" id="4V5R"/>
<dbReference type="PDBsum" id="4V5S"/>
<dbReference type="PDBsum" id="4V68"/>
<dbReference type="PDBsum" id="4V6A"/>
<dbReference type="PDBsum" id="4V6F"/>
<dbReference type="PDBsum" id="4V6G"/>
<dbReference type="PDBsum" id="4V7J"/>
<dbReference type="PDBsum" id="4V7K"/>
<dbReference type="PDBsum" id="4V7L"/>
<dbReference type="PDBsum" id="4V7M"/>
<dbReference type="PDBsum" id="4V7W"/>
<dbReference type="PDBsum" id="4V7X"/>
<dbReference type="PDBsum" id="4V7Y"/>
<dbReference type="PDBsum" id="4V7Z"/>
<dbReference type="PDBsum" id="4V87"/>
<dbReference type="PDBsum" id="4V8A"/>
<dbReference type="PDBsum" id="4V8B"/>
<dbReference type="PDBsum" id="4V8C"/>
<dbReference type="PDBsum" id="4V8D"/>
<dbReference type="PDBsum" id="4V8E"/>
<dbReference type="PDBsum" id="4V8F"/>
<dbReference type="PDBsum" id="4V8G"/>
<dbReference type="PDBsum" id="4V8H"/>
<dbReference type="PDBsum" id="4V8I"/>
<dbReference type="PDBsum" id="4V8J"/>
<dbReference type="PDBsum" id="4V8N"/>
<dbReference type="PDBsum" id="4V8O"/>
<dbReference type="PDBsum" id="4V8Q"/>
<dbReference type="PDBsum" id="4V8U"/>
<dbReference type="PDBsum" id="4V8X"/>
<dbReference type="PDBsum" id="4V90"/>
<dbReference type="PDBsum" id="4V95"/>
<dbReference type="PDBsum" id="4V97"/>
<dbReference type="PDBsum" id="4V9A"/>
<dbReference type="PDBsum" id="4V9B"/>
<dbReference type="PDBsum" id="4V9H"/>
<dbReference type="PDBsum" id="4V9I"/>
<dbReference type="PDBsum" id="4V9R"/>
<dbReference type="PDBsum" id="4V9S"/>
<dbReference type="PDBsum" id="4W2E"/>
<dbReference type="PDBsum" id="4W2F"/>
<dbReference type="PDBsum" id="4W2G"/>
<dbReference type="PDBsum" id="4W2H"/>
<dbReference type="PDBsum" id="4W2I"/>
<dbReference type="PDBsum" id="4W4G"/>
<dbReference type="PDBsum" id="4WPO"/>
<dbReference type="PDBsum" id="4WQ1"/>
<dbReference type="PDBsum" id="4WQF"/>
<dbReference type="PDBsum" id="4WQR"/>
<dbReference type="PDBsum" id="4WQU"/>
<dbReference type="PDBsum" id="4WQY"/>
<dbReference type="PDBsum" id="4WR6"/>
<dbReference type="PDBsum" id="4WRA"/>
<dbReference type="PDBsum" id="4WRO"/>
<dbReference type="PDBsum" id="4WSD"/>
<dbReference type="PDBsum" id="4WSM"/>
<dbReference type="PDBsum" id="4WT1"/>
<dbReference type="PDBsum" id="4WT8"/>
<dbReference type="PDBsum" id="4WU1"/>
<dbReference type="PDBsum" id="4WZD"/>
<dbReference type="PDBsum" id="4WZO"/>
<dbReference type="PDBsum" id="4Y4O"/>
<dbReference type="PDBsum" id="4Y4P"/>
<dbReference type="PDBsum" id="4YPB"/>
<dbReference type="PDBsum" id="4YZV"/>
<dbReference type="PDBsum" id="4Z3S"/>
<dbReference type="PDBsum" id="4Z8C"/>
<dbReference type="PDBsum" id="4ZER"/>
<dbReference type="PDBsum" id="4ZSN"/>
<dbReference type="PDBsum" id="5A9Z"/>
<dbReference type="PDBsum" id="5AA0"/>
<dbReference type="PDBsum" id="5CZP"/>
<dbReference type="PDBsum" id="5D8B"/>
<dbReference type="PDBsum" id="5DFE"/>
<dbReference type="PDBsum" id="5DOX"/>
<dbReference type="PDBsum" id="5DOY"/>
<dbReference type="PDBsum" id="5E7K"/>
<dbReference type="PDBsum" id="5E81"/>
<dbReference type="PDBsum" id="5EL4"/>
<dbReference type="PDBsum" id="5EL5"/>
<dbReference type="PDBsum" id="5EL6"/>
<dbReference type="PDBsum" id="5EL7"/>
<dbReference type="PDBsum" id="5F8K"/>
<dbReference type="PDBsum" id="5FDU"/>
<dbReference type="PDBsum" id="5FDV"/>
<dbReference type="PDBsum" id="5HAU"/>
<dbReference type="PDBsum" id="5HCP"/>
<dbReference type="PDBsum" id="5HCQ"/>
<dbReference type="PDBsum" id="5HCR"/>
<dbReference type="PDBsum" id="5HD1"/>
<dbReference type="PDBsum" id="5IB7"/>
<dbReference type="PDBsum" id="5IB8"/>
<dbReference type="PDBsum" id="5IBB"/>
<dbReference type="PDBsum" id="5IMQ"/>
<dbReference type="PDBsum" id="5IMR"/>
<dbReference type="PDBsum" id="5J30"/>
<dbReference type="PDBsum" id="5J3C"/>
<dbReference type="PDBsum" id="5J4B"/>
<dbReference type="PDBsum" id="5J4C"/>
<dbReference type="PDBsum" id="5J8B"/>
<dbReference type="PDBsum" id="5NDJ"/>
<dbReference type="PDBsum" id="5NDK"/>
<dbReference type="PDBsum" id="5OT7"/>
<dbReference type="PDBsum" id="5UQ7"/>
<dbReference type="PDBsum" id="5UQ8"/>
<dbReference type="PDBsum" id="5VP2"/>
<dbReference type="PDBsum" id="5VPO"/>
<dbReference type="PDBsum" id="5VPP"/>
<dbReference type="PDBsum" id="5W4K"/>
<dbReference type="PDBsum" id="5WIS"/>
<dbReference type="PDBsum" id="5WIT"/>
<dbReference type="PDBsum" id="5ZLU"/>
<dbReference type="PDBsum" id="6BUW"/>
<dbReference type="PDBsum" id="6BZ6"/>
<dbReference type="PDBsum" id="6BZ7"/>
<dbReference type="PDBsum" id="6BZ8"/>
<dbReference type="PDBsum" id="6C5L"/>
<dbReference type="PDBsum" id="6CAE"/>
<dbReference type="PDBsum" id="6CFJ"/>
<dbReference type="PDBsum" id="6CFK"/>
<dbReference type="PDBsum" id="6CFL"/>
<dbReference type="PDBsum" id="6CZR"/>
<dbReference type="PDBsum" id="6FKR"/>
<dbReference type="PDBsum" id="6GSJ"/>
<dbReference type="PDBsum" id="6GSK"/>
<dbReference type="PDBsum" id="6GSL"/>
<dbReference type="PDBsum" id="6GZQ"/>
<dbReference type="PDBsum" id="6GZX"/>
<dbReference type="PDBsum" id="6GZZ"/>
<dbReference type="PDBsum" id="6N9E"/>
<dbReference type="PDBsum" id="6N9F"/>
<dbReference type="PDBsum" id="6ND5"/>
<dbReference type="PDBsum" id="6ND6"/>
<dbReference type="PDBsum" id="6NDK"/>
<dbReference type="PDBsum" id="6NSH"/>
<dbReference type="PDBsum" id="6NTA"/>
<dbReference type="PDBsum" id="6NUO"/>
<dbReference type="PDBsum" id="6NWY"/>
<dbReference type="PDBsum" id="6O3M"/>
<dbReference type="PDBsum" id="6O97"/>
<dbReference type="PDBsum" id="6OF1"/>
<dbReference type="PDBsum" id="6OF6"/>
<dbReference type="PDBsum" id="6OJ2"/>
<dbReference type="PDBsum" id="6OPE"/>
<dbReference type="PDBsum" id="6ORD"/>
<dbReference type="PDBsum" id="6OSI"/>
<dbReference type="PDBsum" id="6OTR"/>
<dbReference type="PDBsum" id="6OXA"/>
<dbReference type="PDBsum" id="6OXI"/>
<dbReference type="PDBsum" id="6Q95"/>
<dbReference type="PDBsum" id="6QNQ"/>
<dbReference type="PDBsum" id="6QNR"/>
<dbReference type="PDBsum" id="6UCQ"/>
<dbReference type="PDBsum" id="6UO1"/>
<dbReference type="PDBsum" id="6XHV"/>
<dbReference type="PDBsum" id="6XHW"/>
<dbReference type="PDBsum" id="6XHX"/>
<dbReference type="PDBsum" id="6XHY"/>
<dbReference type="PDBsum" id="6XQD"/>
<dbReference type="PDBsum" id="6XQE"/>
<dbReference type="PDBsum" id="7AZO"/>
<dbReference type="PDBsum" id="7AZS"/>
<dbReference type="PDBsum" id="7JQL"/>
<dbReference type="PDBsum" id="7JQM"/>
<dbReference type="PDBsum" id="7LH5"/>
<dbReference type="PDBsum" id="7MD7"/>
<dbReference type="PDBsum" id="7RQ8"/>
<dbReference type="PDBsum" id="7RQ9"/>
<dbReference type="PDBsum" id="7RQA"/>
<dbReference type="PDBsum" id="7RQB"/>
<dbReference type="PDBsum" id="7RQC"/>
<dbReference type="PDBsum" id="7RQD"/>
<dbReference type="PDBsum" id="7RQE"/>
<dbReference type="PDBsum" id="7U2H"/>
<dbReference type="PDBsum" id="7U2I"/>
<dbReference type="PDBsum" id="7U2J"/>
<dbReference type="PDBsum" id="8CVJ"/>
<dbReference type="PDBsum" id="8CVK"/>
<dbReference type="PDBsum" id="8CVL"/>
<dbReference type="PDBsum" id="8EKB"/>
<dbReference type="PDBsum" id="8EV6"/>
<dbReference type="PDBsum" id="8EV7"/>
<dbReference type="PDBsum" id="8FC1"/>
<dbReference type="PDBsum" id="8FC2"/>
<dbReference type="PDBsum" id="8FC3"/>
<dbReference type="PDBsum" id="8FC4"/>
<dbReference type="PDBsum" id="8FC5"/>
<dbReference type="PDBsum" id="8FC6"/>
<dbReference type="PDBsum" id="8FOM"/>
<dbReference type="PDBsum" id="8FON"/>
<dbReference type="PDBsum" id="8G29"/>
<dbReference type="PDBsum" id="8G2A"/>
<dbReference type="PDBsum" id="8G2B"/>
<dbReference type="PDBsum" id="8G2C"/>
<dbReference type="PDBsum" id="8G2D"/>
<dbReference type="PDBsum" id="8T8B"/>
<dbReference type="PDBsum" id="8T8C"/>
<dbReference type="PDBsum" id="8UD6"/>
<dbReference type="PDBsum" id="8UD7"/>
<dbReference type="PDBsum" id="8UD8"/>
<dbReference type="PDBsum" id="8UVR"/>
<dbReference type="PDBsum" id="8UVS"/>
<dbReference type="PDBsum" id="8VTU"/>
<dbReference type="PDBsum" id="8VTV"/>
<dbReference type="PDBsum" id="8VTW"/>
<dbReference type="PDBsum" id="8VTX"/>
<dbReference type="PDBsum" id="8VTY"/>
<dbReference type="PDBsum" id="8WV1"/>
<dbReference type="PDBsum" id="9B00"/>
<dbReference type="PDBsum" id="9D0J"/>
<dbReference type="PDBsum" id="9D7R"/>
<dbReference type="PDBsum" id="9D7S"/>
<dbReference type="PDBsum" id="9D7T"/>
<dbReference type="PDBsum" id="9DFC"/>
<dbReference type="PDBsum" id="9DFD"/>
<dbReference type="PDBsum" id="9DFE"/>
<dbReference type="EMDB" id="EMD-0101"/>
<dbReference type="EMDB" id="EMD-0104"/>
<dbReference type="EMDB" id="EMD-0105"/>
<dbReference type="EMDB" id="EMD-3852"/>
<dbReference type="EMDB" id="EMD-4475"/>
<dbReference type="EMDB" id="EMD-6934"/>
<dbReference type="EMDB" id="EMD-8596"/>
<dbReference type="EMDB" id="EMD-8597"/>
<dbReference type="SMR" id="Q5SHQ6"/>
<dbReference type="IntAct" id="Q5SHQ6">
    <property type="interactions" value="9"/>
</dbReference>
<dbReference type="EnsemblBacteria" id="BAD71497">
    <property type="protein sequence ID" value="BAD71497"/>
    <property type="gene ID" value="BAD71497"/>
</dbReference>
<dbReference type="GeneID" id="3169818"/>
<dbReference type="KEGG" id="ttj:TTHA1674"/>
<dbReference type="PATRIC" id="fig|300852.9.peg.1644"/>
<dbReference type="eggNOG" id="COG1841">
    <property type="taxonomic scope" value="Bacteria"/>
</dbReference>
<dbReference type="HOGENOM" id="CLU_131047_1_3_0"/>
<dbReference type="EvolutionaryTrace" id="Q5SHQ6"/>
<dbReference type="Proteomes" id="UP000000532">
    <property type="component" value="Chromosome"/>
</dbReference>
<dbReference type="GO" id="GO:0022625">
    <property type="term" value="C:cytosolic large ribosomal subunit"/>
    <property type="evidence" value="ECO:0007669"/>
    <property type="project" value="TreeGrafter"/>
</dbReference>
<dbReference type="GO" id="GO:0003735">
    <property type="term" value="F:structural constituent of ribosome"/>
    <property type="evidence" value="ECO:0007669"/>
    <property type="project" value="InterPro"/>
</dbReference>
<dbReference type="GO" id="GO:0006412">
    <property type="term" value="P:translation"/>
    <property type="evidence" value="ECO:0007669"/>
    <property type="project" value="UniProtKB-UniRule"/>
</dbReference>
<dbReference type="CDD" id="cd01658">
    <property type="entry name" value="Ribosomal_L30"/>
    <property type="match status" value="1"/>
</dbReference>
<dbReference type="Gene3D" id="3.30.1390.20">
    <property type="entry name" value="Ribosomal protein L30, ferredoxin-like fold domain"/>
    <property type="match status" value="1"/>
</dbReference>
<dbReference type="HAMAP" id="MF_01371_B">
    <property type="entry name" value="Ribosomal_uL30_B"/>
    <property type="match status" value="1"/>
</dbReference>
<dbReference type="InterPro" id="IPR036919">
    <property type="entry name" value="Ribo_uL30_ferredoxin-like_sf"/>
</dbReference>
<dbReference type="InterPro" id="IPR005996">
    <property type="entry name" value="Ribosomal_uL30_bac-type"/>
</dbReference>
<dbReference type="InterPro" id="IPR018038">
    <property type="entry name" value="Ribosomal_uL30_CS"/>
</dbReference>
<dbReference type="InterPro" id="IPR016082">
    <property type="entry name" value="Ribosomal_uL30_ferredoxin-like"/>
</dbReference>
<dbReference type="NCBIfam" id="TIGR01308">
    <property type="entry name" value="rpmD_bact"/>
    <property type="match status" value="1"/>
</dbReference>
<dbReference type="PANTHER" id="PTHR15892:SF2">
    <property type="entry name" value="LARGE RIBOSOMAL SUBUNIT PROTEIN UL30M"/>
    <property type="match status" value="1"/>
</dbReference>
<dbReference type="PANTHER" id="PTHR15892">
    <property type="entry name" value="MITOCHONDRIAL RIBOSOMAL PROTEIN L30"/>
    <property type="match status" value="1"/>
</dbReference>
<dbReference type="Pfam" id="PF00327">
    <property type="entry name" value="Ribosomal_L30"/>
    <property type="match status" value="1"/>
</dbReference>
<dbReference type="PIRSF" id="PIRSF002211">
    <property type="entry name" value="Ribosomal_L30_bac-type"/>
    <property type="match status" value="1"/>
</dbReference>
<dbReference type="SUPFAM" id="SSF55129">
    <property type="entry name" value="Ribosomal protein L30p/L7e"/>
    <property type="match status" value="1"/>
</dbReference>
<dbReference type="PROSITE" id="PS00634">
    <property type="entry name" value="RIBOSOMAL_L30"/>
    <property type="match status" value="1"/>
</dbReference>
<evidence type="ECO:0000255" key="1">
    <source>
        <dbReference type="HAMAP-Rule" id="MF_01371"/>
    </source>
</evidence>
<evidence type="ECO:0000269" key="2">
    <source>
    </source>
</evidence>
<evidence type="ECO:0000269" key="3">
    <source>
    </source>
</evidence>
<evidence type="ECO:0000269" key="4">
    <source ref="3"/>
</evidence>
<evidence type="ECO:0000305" key="5"/>
<evidence type="ECO:0007829" key="6">
    <source>
        <dbReference type="PDB" id="4WT8"/>
    </source>
</evidence>
<gene>
    <name evidence="1" type="primary">rpmD</name>
    <name type="ordered locus">TTHA1674</name>
</gene>
<name>RL30_THET8</name>
<sequence length="60" mass="6785">MPRLKVKLVKSPIGYPKDQKAALKALGLRRLQQERVLEDTPAIRGNVEKVAHLVRVEVVE</sequence>
<feature type="initiator methionine" description="Removed" evidence="2 4">
    <location>
        <position position="1"/>
    </location>
</feature>
<feature type="chain" id="PRO_0000104616" description="Large ribosomal subunit protein uL30">
    <location>
        <begin position="2"/>
        <end position="60"/>
    </location>
</feature>
<feature type="strand" evidence="6">
    <location>
        <begin position="4"/>
        <end position="8"/>
    </location>
</feature>
<feature type="helix" evidence="6">
    <location>
        <begin position="17"/>
        <end position="26"/>
    </location>
</feature>
<feature type="strand" evidence="6">
    <location>
        <begin position="34"/>
        <end position="37"/>
    </location>
</feature>
<feature type="helix" evidence="6">
    <location>
        <begin position="41"/>
        <end position="49"/>
    </location>
</feature>
<feature type="helix" evidence="6">
    <location>
        <begin position="51"/>
        <end position="53"/>
    </location>
</feature>
<feature type="strand" evidence="6">
    <location>
        <begin position="54"/>
        <end position="58"/>
    </location>
</feature>
<accession>Q5SHQ6</accession>
<proteinExistence type="evidence at protein level"/>
<reference key="1">
    <citation type="submission" date="2004-11" db="EMBL/GenBank/DDBJ databases">
        <title>Complete genome sequence of Thermus thermophilus HB8.</title>
        <authorList>
            <person name="Masui R."/>
            <person name="Kurokawa K."/>
            <person name="Nakagawa N."/>
            <person name="Tokunaga F."/>
            <person name="Koyama Y."/>
            <person name="Shibata T."/>
            <person name="Oshima T."/>
            <person name="Yokoyama S."/>
            <person name="Yasunaga T."/>
            <person name="Kuramitsu S."/>
        </authorList>
    </citation>
    <scope>NUCLEOTIDE SEQUENCE [LARGE SCALE GENOMIC DNA]</scope>
    <source>
        <strain>ATCC 27634 / DSM 579 / HB8</strain>
    </source>
</reference>
<reference key="2">
    <citation type="journal article" date="2000" name="Biol. Chem.">
        <title>Identification of the 50S ribosomal proteins from the eubacterium Thermus thermophilus.</title>
        <authorList>
            <person name="Katsani K.R."/>
            <person name="Tsiboli P."/>
            <person name="Anagnostopoulos K."/>
            <person name="Urlaub H."/>
            <person name="Choli-Papadopoulou T."/>
        </authorList>
    </citation>
    <scope>PROTEIN SEQUENCE OF 2-23</scope>
    <source>
        <strain>ATCC 27634 / DSM 579 / HB8</strain>
    </source>
</reference>
<reference key="3">
    <citation type="journal article" date="1995" name="Endocyt. Cell Res.">
        <title>The isolation and complete amino acid sequence of the ribosomal protein L36 from Thermus thermophilus and its zinc-binding motif.</title>
        <authorList>
            <person name="Boysen R.I."/>
            <person name="Lorenz S."/>
            <person name="Kim J.S."/>
            <person name="Schroeder W.F.K.J."/>
            <person name="Erdmann V.A."/>
        </authorList>
    </citation>
    <scope>PROTEIN SEQUENCE OF 2-14</scope>
</reference>
<reference key="4">
    <citation type="journal article" date="2005" name="Proteomics">
        <title>Extending ribosomal protein identifications to unsequenced bacterial strains using matrix-assisted laser desorption/ionization mass spectrometry.</title>
        <authorList>
            <person name="Suh M.-J."/>
            <person name="Hamburg D.M."/>
            <person name="Gregory S.T."/>
            <person name="Dahlberg A.E."/>
            <person name="Limbach P.A."/>
        </authorList>
    </citation>
    <scope>MASS SPECTROMETRY</scope>
    <source>
        <strain>ATCC 27634 / DSM 579 / HB8</strain>
    </source>
</reference>
<reference key="5">
    <citation type="journal article" date="2001" name="Cell">
        <title>The path of messenger RNA through the ribosome.</title>
        <authorList>
            <person name="Yusupova G.Z."/>
            <person name="Yusupov M.M."/>
            <person name="Cate J.H.D."/>
            <person name="Noller H.F."/>
        </authorList>
    </citation>
    <scope>X-RAY CRYSTALLOGRAPHY (5.0 ANGSTROMS) OF THE RIBOSOME</scope>
</reference>
<reference key="6">
    <citation type="journal article" date="2001" name="Science">
        <title>Crystal structure of the ribosome at 5.5 A resolution.</title>
        <authorList>
            <person name="Yusupov M.M."/>
            <person name="Yusupova G.Z."/>
            <person name="Baucom A."/>
            <person name="Lieberman K."/>
            <person name="Earnest T.N."/>
            <person name="Cate J.H.D."/>
            <person name="Noller H.F."/>
        </authorList>
    </citation>
    <scope>X-RAY CRYSTALLOGRAPHY (5.5 ANGSTROMS) OF THE RIBOSOME</scope>
</reference>
<reference key="7">
    <citation type="journal article" date="2005" name="Cell">
        <title>Crystal structures of the ribosome in complex with release factors RF1 and RF2 bound to a cognate stop codon.</title>
        <authorList>
            <person name="Petry S."/>
            <person name="Brodersen D.E."/>
            <person name="Murphy F.V."/>
            <person name="Dunham C.M."/>
            <person name="Selmer M."/>
            <person name="Tarry M.J."/>
            <person name="Kelley A.C."/>
            <person name="Ramakrishnan V."/>
        </authorList>
    </citation>
    <scope>X-RAY CRYSTALLOGRAPHY (5.90 ANGSTROMS) OF 70S RIBOSOME IN COMPLEX WITH RF1 OR RF2</scope>
    <scope>SUBUNIT</scope>
</reference>
<reference key="8">
    <citation type="journal article" date="2008" name="Science">
        <title>Insights into translational termination from the structure of RF2 bound to the ribosome.</title>
        <authorList>
            <person name="Weixlbaumer A."/>
            <person name="Jin H."/>
            <person name="Neubauer C."/>
            <person name="Voorhees R.M."/>
            <person name="Petry S."/>
            <person name="Kelley A.C."/>
            <person name="Ramakrishnan V."/>
        </authorList>
    </citation>
    <scope>X-RAY CRYSTALLOGRAPHY (3.45 ANGSTROMS) OF 70S RIBOSOME IN COMPLEX WITH RF2</scope>
    <scope>SUBUNIT</scope>
</reference>
<reference key="9">
    <citation type="journal article" date="2010" name="Proc. Natl. Acad. Sci. U.S.A.">
        <title>Structure of the 70S ribosome bound to release factor 2 and a substrate analog provides insights into catalysis of peptide release.</title>
        <authorList>
            <person name="Jin H."/>
            <person name="Kelley A.C."/>
            <person name="Loakes D."/>
            <person name="Ramakrishnan V."/>
        </authorList>
    </citation>
    <scope>X-RAY CRYSTALLOGRAPHY (3.10 ANGSTROMS) OF 70S RIBOSOME IN COMPLEX WITH RF2</scope>
    <scope>SUBUNIT</scope>
</reference>
<organism>
    <name type="scientific">Thermus thermophilus (strain ATCC 27634 / DSM 579 / HB8)</name>
    <dbReference type="NCBI Taxonomy" id="300852"/>
    <lineage>
        <taxon>Bacteria</taxon>
        <taxon>Thermotogati</taxon>
        <taxon>Deinococcota</taxon>
        <taxon>Deinococci</taxon>
        <taxon>Thermales</taxon>
        <taxon>Thermaceae</taxon>
        <taxon>Thermus</taxon>
    </lineage>
</organism>